<reference key="1">
    <citation type="journal article" date="2007" name="PLoS ONE">
        <title>Molecular correlates of host specialization in Staphylococcus aureus.</title>
        <authorList>
            <person name="Herron-Olson L."/>
            <person name="Fitzgerald J.R."/>
            <person name="Musser J.M."/>
            <person name="Kapur V."/>
        </authorList>
    </citation>
    <scope>NUCLEOTIDE SEQUENCE [LARGE SCALE GENOMIC DNA]</scope>
    <source>
        <strain>bovine RF122 / ET3-1</strain>
    </source>
</reference>
<dbReference type="EMBL" id="AJ938182">
    <property type="protein sequence ID" value="CAI81931.1"/>
    <property type="molecule type" value="Genomic_DNA"/>
</dbReference>
<dbReference type="RefSeq" id="WP_000977024.1">
    <property type="nucleotide sequence ID" value="NC_007622.1"/>
</dbReference>
<dbReference type="SMR" id="Q2YZ22"/>
<dbReference type="KEGG" id="sab:SAB2242"/>
<dbReference type="HOGENOM" id="CLU_106729_4_0_9"/>
<dbReference type="GO" id="GO:0005737">
    <property type="term" value="C:cytoplasm"/>
    <property type="evidence" value="ECO:0007669"/>
    <property type="project" value="UniProtKB-SubCell"/>
</dbReference>
<dbReference type="GO" id="GO:0003677">
    <property type="term" value="F:DNA binding"/>
    <property type="evidence" value="ECO:0007669"/>
    <property type="project" value="UniProtKB-KW"/>
</dbReference>
<dbReference type="GO" id="GO:0000156">
    <property type="term" value="F:phosphorelay response regulator activity"/>
    <property type="evidence" value="ECO:0007669"/>
    <property type="project" value="InterPro"/>
</dbReference>
<dbReference type="Gene3D" id="2.40.50.1020">
    <property type="entry name" value="LytTr DNA-binding domain"/>
    <property type="match status" value="1"/>
</dbReference>
<dbReference type="InterPro" id="IPR046947">
    <property type="entry name" value="LytR-like"/>
</dbReference>
<dbReference type="InterPro" id="IPR007492">
    <property type="entry name" value="LytTR_DNA-bd_dom"/>
</dbReference>
<dbReference type="PANTHER" id="PTHR37299:SF2">
    <property type="entry name" value="HTH LYTTR-TYPE DOMAIN-CONTAINING PROTEIN"/>
    <property type="match status" value="1"/>
</dbReference>
<dbReference type="PANTHER" id="PTHR37299">
    <property type="entry name" value="TRANSCRIPTIONAL REGULATOR-RELATED"/>
    <property type="match status" value="1"/>
</dbReference>
<dbReference type="Pfam" id="PF04397">
    <property type="entry name" value="LytTR"/>
    <property type="match status" value="1"/>
</dbReference>
<dbReference type="SMART" id="SM00850">
    <property type="entry name" value="LytTR"/>
    <property type="match status" value="1"/>
</dbReference>
<dbReference type="PROSITE" id="PS50930">
    <property type="entry name" value="HTH_LYTTR"/>
    <property type="match status" value="1"/>
</dbReference>
<evidence type="ECO:0000255" key="1">
    <source>
        <dbReference type="PROSITE-ProRule" id="PRU00112"/>
    </source>
</evidence>
<evidence type="ECO:0000305" key="2"/>
<feature type="chain" id="PRO_0000298600" description="Uncharacterized HTH-type transcriptional regulator SAB2242">
    <location>
        <begin position="1"/>
        <end position="147"/>
    </location>
</feature>
<feature type="domain" description="HTH LytTR-type" evidence="1">
    <location>
        <begin position="44"/>
        <end position="147"/>
    </location>
</feature>
<keyword id="KW-0963">Cytoplasm</keyword>
<keyword id="KW-0238">DNA-binding</keyword>
<keyword id="KW-0804">Transcription</keyword>
<keyword id="KW-0805">Transcription regulation</keyword>
<organism>
    <name type="scientific">Staphylococcus aureus (strain bovine RF122 / ET3-1)</name>
    <dbReference type="NCBI Taxonomy" id="273036"/>
    <lineage>
        <taxon>Bacteria</taxon>
        <taxon>Bacillati</taxon>
        <taxon>Bacillota</taxon>
        <taxon>Bacilli</taxon>
        <taxon>Bacillales</taxon>
        <taxon>Staphylococcaceae</taxon>
        <taxon>Staphylococcus</taxon>
    </lineage>
</organism>
<gene>
    <name type="ordered locus">SAB2242</name>
</gene>
<proteinExistence type="predicted"/>
<sequence>MMKLNLFINANETESYIDIHAPKMNDHVQSIINAVNDLDKSHTLVGYIDKEIHIIHISDVITFQVINKNVTAITRNQKFKLKLRLYELEKQLPQHFIRISKSEIVNKYCIEKLLLEPNGLIRMYLKDAHYTYSSRRYLKSIKERLSI</sequence>
<comment type="subcellular location">
    <subcellularLocation>
        <location evidence="2">Cytoplasm</location>
    </subcellularLocation>
</comment>
<name>Y2242_STAAB</name>
<protein>
    <recommendedName>
        <fullName>Uncharacterized HTH-type transcriptional regulator SAB2242</fullName>
    </recommendedName>
</protein>
<accession>Q2YZ22</accession>